<reference key="1">
    <citation type="journal article" date="2007" name="J. Bacteriol.">
        <title>Complete genome sequence of Haemophilus somnus (Histophilus somni) strain 129Pt and comparison to Haemophilus ducreyi 35000HP and Haemophilus influenzae Rd.</title>
        <authorList>
            <person name="Challacombe J.F."/>
            <person name="Duncan A.J."/>
            <person name="Brettin T.S."/>
            <person name="Bruce D."/>
            <person name="Chertkov O."/>
            <person name="Detter J.C."/>
            <person name="Han C.S."/>
            <person name="Misra M."/>
            <person name="Richardson P."/>
            <person name="Tapia R."/>
            <person name="Thayer N."/>
            <person name="Xie G."/>
            <person name="Inzana T.J."/>
        </authorList>
    </citation>
    <scope>NUCLEOTIDE SEQUENCE [LARGE SCALE GENOMIC DNA]</scope>
    <source>
        <strain>129Pt</strain>
    </source>
</reference>
<sequence>MITIKKGLDLPIAGKPEQVIHNGNAVKEVALLGEEYVGMRPSMKVREGDVVKKGQVLFEDKKNPGIVFTAPASGTVTAINRGAKRVLQSVVIKVEGNEQITFTQYNEDELKKLTSDQVRQNLQSSGLWTALRTRPFSKVPASDAVPSSIFVNAMDTNPLSANPEIVLKEHWQDFTDGLTVLSRLHEGKLHLCKAGDSNIPTIDLPNLAVHDFSGPHPAGLSGTHIHFIDPVSVTKSVWYLNYQDVIAIGKLFTTGEIYTDRVVSLAGPQVKNPRLIRTQLGANLSHLTENELSAGENRVISGSVLSGNTAIGPYNYLGRYALQVSVIAEGREKEFLGWIMPGKNKFSITRTVLGHFSSKLFNFTSAVNGGHRAMVPIGAYERVVPLDIIPTLLLRDLASGDTDSAQALGCLELDEEDLALCTFVCPGKNEYGPMLRAALDKIEKEG</sequence>
<dbReference type="EC" id="7.2.1.1" evidence="1"/>
<dbReference type="EMBL" id="CP000436">
    <property type="protein sequence ID" value="ABI25961.1"/>
    <property type="molecule type" value="Genomic_DNA"/>
</dbReference>
<dbReference type="SMR" id="Q0I5X6"/>
<dbReference type="KEGG" id="hso:HS_1693"/>
<dbReference type="eggNOG" id="COG1726">
    <property type="taxonomic scope" value="Bacteria"/>
</dbReference>
<dbReference type="HOGENOM" id="CLU_046656_0_0_6"/>
<dbReference type="GO" id="GO:0016655">
    <property type="term" value="F:oxidoreductase activity, acting on NAD(P)H, quinone or similar compound as acceptor"/>
    <property type="evidence" value="ECO:0007669"/>
    <property type="project" value="UniProtKB-UniRule"/>
</dbReference>
<dbReference type="GO" id="GO:0006814">
    <property type="term" value="P:sodium ion transport"/>
    <property type="evidence" value="ECO:0007669"/>
    <property type="project" value="UniProtKB-UniRule"/>
</dbReference>
<dbReference type="Gene3D" id="2.40.50.100">
    <property type="match status" value="1"/>
</dbReference>
<dbReference type="HAMAP" id="MF_00425">
    <property type="entry name" value="NqrA"/>
    <property type="match status" value="1"/>
</dbReference>
<dbReference type="InterPro" id="IPR008703">
    <property type="entry name" value="NqrA"/>
</dbReference>
<dbReference type="InterPro" id="IPR056148">
    <property type="entry name" value="NQRA_2nd"/>
</dbReference>
<dbReference type="InterPro" id="IPR022615">
    <property type="entry name" value="NqrA_C_domain"/>
</dbReference>
<dbReference type="InterPro" id="IPR056147">
    <property type="entry name" value="NQRA_N"/>
</dbReference>
<dbReference type="NCBIfam" id="TIGR01936">
    <property type="entry name" value="nqrA"/>
    <property type="match status" value="1"/>
</dbReference>
<dbReference type="NCBIfam" id="NF003759">
    <property type="entry name" value="PRK05352.1-2"/>
    <property type="match status" value="1"/>
</dbReference>
<dbReference type="PANTHER" id="PTHR37839">
    <property type="entry name" value="NA(+)-TRANSLOCATING NADH-QUINONE REDUCTASE SUBUNIT A"/>
    <property type="match status" value="1"/>
</dbReference>
<dbReference type="PANTHER" id="PTHR37839:SF1">
    <property type="entry name" value="NA(+)-TRANSLOCATING NADH-QUINONE REDUCTASE SUBUNIT A"/>
    <property type="match status" value="1"/>
</dbReference>
<dbReference type="Pfam" id="PF24836">
    <property type="entry name" value="NQRA_2nd"/>
    <property type="match status" value="1"/>
</dbReference>
<dbReference type="Pfam" id="PF05896">
    <property type="entry name" value="NQRA_N"/>
    <property type="match status" value="1"/>
</dbReference>
<dbReference type="Pfam" id="PF11973">
    <property type="entry name" value="NQRA_SLBB"/>
    <property type="match status" value="1"/>
</dbReference>
<comment type="function">
    <text evidence="1">NQR complex catalyzes the reduction of ubiquinone-1 to ubiquinol by two successive reactions, coupled with the transport of Na(+) ions from the cytoplasm to the periplasm. NqrA to NqrE are probably involved in the second step, the conversion of ubisemiquinone to ubiquinol.</text>
</comment>
<comment type="catalytic activity">
    <reaction evidence="1">
        <text>a ubiquinone + n Na(+)(in) + NADH + H(+) = a ubiquinol + n Na(+)(out) + NAD(+)</text>
        <dbReference type="Rhea" id="RHEA:47748"/>
        <dbReference type="Rhea" id="RHEA-COMP:9565"/>
        <dbReference type="Rhea" id="RHEA-COMP:9566"/>
        <dbReference type="ChEBI" id="CHEBI:15378"/>
        <dbReference type="ChEBI" id="CHEBI:16389"/>
        <dbReference type="ChEBI" id="CHEBI:17976"/>
        <dbReference type="ChEBI" id="CHEBI:29101"/>
        <dbReference type="ChEBI" id="CHEBI:57540"/>
        <dbReference type="ChEBI" id="CHEBI:57945"/>
        <dbReference type="EC" id="7.2.1.1"/>
    </reaction>
</comment>
<comment type="subunit">
    <text evidence="1">Composed of six subunits; NqrA, NqrB, NqrC, NqrD, NqrE and NqrF.</text>
</comment>
<comment type="similarity">
    <text evidence="1">Belongs to the NqrA family.</text>
</comment>
<keyword id="KW-0406">Ion transport</keyword>
<keyword id="KW-0520">NAD</keyword>
<keyword id="KW-0915">Sodium</keyword>
<keyword id="KW-0739">Sodium transport</keyword>
<keyword id="KW-1278">Translocase</keyword>
<keyword id="KW-0813">Transport</keyword>
<keyword id="KW-0830">Ubiquinone</keyword>
<protein>
    <recommendedName>
        <fullName evidence="1">Na(+)-translocating NADH-quinone reductase subunit A</fullName>
        <shortName evidence="1">Na(+)-NQR subunit A</shortName>
        <shortName evidence="1">Na(+)-translocating NQR subunit A</shortName>
        <ecNumber evidence="1">7.2.1.1</ecNumber>
    </recommendedName>
    <alternativeName>
        <fullName evidence="1">NQR complex subunit A</fullName>
    </alternativeName>
    <alternativeName>
        <fullName evidence="1">NQR-1 subunit A</fullName>
    </alternativeName>
</protein>
<proteinExistence type="inferred from homology"/>
<organism>
    <name type="scientific">Histophilus somni (strain 129Pt)</name>
    <name type="common">Haemophilus somnus</name>
    <dbReference type="NCBI Taxonomy" id="205914"/>
    <lineage>
        <taxon>Bacteria</taxon>
        <taxon>Pseudomonadati</taxon>
        <taxon>Pseudomonadota</taxon>
        <taxon>Gammaproteobacteria</taxon>
        <taxon>Pasteurellales</taxon>
        <taxon>Pasteurellaceae</taxon>
        <taxon>Histophilus</taxon>
    </lineage>
</organism>
<accession>Q0I5X6</accession>
<feature type="chain" id="PRO_1000060116" description="Na(+)-translocating NADH-quinone reductase subunit A">
    <location>
        <begin position="1"/>
        <end position="446"/>
    </location>
</feature>
<name>NQRA_HISS1</name>
<evidence type="ECO:0000255" key="1">
    <source>
        <dbReference type="HAMAP-Rule" id="MF_00425"/>
    </source>
</evidence>
<gene>
    <name evidence="1" type="primary">nqrA</name>
    <name type="ordered locus">HS_1693</name>
</gene>